<organism>
    <name type="scientific">Nitratidesulfovibrio vulgaris (strain ATCC 29579 / DSM 644 / CCUG 34227 / NCIMB 8303 / VKM B-1760 / Hildenborough)</name>
    <name type="common">Desulfovibrio vulgaris</name>
    <dbReference type="NCBI Taxonomy" id="882"/>
    <lineage>
        <taxon>Bacteria</taxon>
        <taxon>Pseudomonadati</taxon>
        <taxon>Thermodesulfobacteriota</taxon>
        <taxon>Desulfovibrionia</taxon>
        <taxon>Desulfovibrionales</taxon>
        <taxon>Desulfovibrionaceae</taxon>
        <taxon>Nitratidesulfovibrio</taxon>
    </lineage>
</organism>
<gene>
    <name type="ordered locus">DVU_3171</name>
</gene>
<name>CYC3_NITV2</name>
<reference key="1">
    <citation type="journal article" date="1986" name="Eur. J. Biochem.">
        <title>Cloning and sequencing of the gene encoding cytochrome c3 from Desulfovibrio vulgaris (Hildenborough).</title>
        <authorList>
            <person name="Voordouw G."/>
            <person name="Brenner S."/>
        </authorList>
    </citation>
    <scope>NUCLEOTIDE SEQUENCE [GENOMIC DNA]</scope>
</reference>
<reference key="2">
    <citation type="journal article" date="2004" name="Nat. Biotechnol.">
        <title>The genome sequence of the anaerobic, sulfate-reducing bacterium Desulfovibrio vulgaris Hildenborough.</title>
        <authorList>
            <person name="Heidelberg J.F."/>
            <person name="Seshadri R."/>
            <person name="Haveman S.A."/>
            <person name="Hemme C.L."/>
            <person name="Paulsen I.T."/>
            <person name="Kolonay J.F."/>
            <person name="Eisen J.A."/>
            <person name="Ward N.L."/>
            <person name="Methe B.A."/>
            <person name="Brinkac L.M."/>
            <person name="Daugherty S.C."/>
            <person name="DeBoy R.T."/>
            <person name="Dodson R.J."/>
            <person name="Durkin A.S."/>
            <person name="Madupu R."/>
            <person name="Nelson W.C."/>
            <person name="Sullivan S.A."/>
            <person name="Fouts D.E."/>
            <person name="Haft D.H."/>
            <person name="Selengut J."/>
            <person name="Peterson J.D."/>
            <person name="Davidsen T.M."/>
            <person name="Zafar N."/>
            <person name="Zhou L."/>
            <person name="Radune D."/>
            <person name="Dimitrov G."/>
            <person name="Hance M."/>
            <person name="Tran K."/>
            <person name="Khouri H.M."/>
            <person name="Gill J."/>
            <person name="Utterback T.R."/>
            <person name="Feldblyum T.V."/>
            <person name="Wall J.D."/>
            <person name="Voordouw G."/>
            <person name="Fraser C.M."/>
        </authorList>
    </citation>
    <scope>NUCLEOTIDE SEQUENCE [LARGE SCALE GENOMIC DNA]</scope>
    <source>
        <strain>ATCC 29579 / DSM 644 / CCUG 34227 / NCIMB 8303 / VKM B-1760 / Hildenborough</strain>
    </source>
</reference>
<reference key="3">
    <citation type="journal article" date="1974" name="J. Biol. Chem.">
        <title>Amino acid sequence of cytochrome c3 from Desulfovibrio vulgaris.</title>
        <authorList>
            <person name="Trousil E.B."/>
            <person name="Campbell L.L."/>
        </authorList>
    </citation>
    <scope>PROTEIN SEQUENCE OF 23-129</scope>
</reference>
<reference key="4">
    <citation type="journal article" date="1993" name="Can. J. Microbiol.">
        <title>Rapid comparison of the cytochrome c3 gene from nine strains of Desulfovibrio vulgaris using polymerase chain reaction amplification.</title>
        <authorList>
            <person name="Kwoh D.Y."/>
            <person name="Vedvick T.S."/>
            <person name="McCue A.F."/>
            <person name="Gevertz D."/>
        </authorList>
    </citation>
    <scope>PROTEIN SEQUENCE OF 23-44</scope>
</reference>
<reference key="5">
    <citation type="journal article" date="1991" name="J. Biochem.">
        <title>Effects of amino acid substitution on three-dimensional structure: an X-ray analysis of cytochrome c3 from Desulfovibrio vulgaris Hildenborough at 2-A resolution.</title>
        <authorList>
            <person name="Morimoto Y."/>
            <person name="Tani T."/>
            <person name="Okumura H."/>
            <person name="Higuchi Y."/>
            <person name="Yasuoka N."/>
        </authorList>
    </citation>
    <scope>X-RAY CRYSTALLOGRAPHY (2.0 ANGSTROMS)</scope>
</reference>
<reference key="6">
    <citation type="journal article" date="1993" name="J. Mol. Biol.">
        <title>Structure analysis of cytochrome c3 from Desulfovibrio vulgaris Hildenborough at 1.9-A resolution.</title>
        <authorList>
            <person name="Matias P.M."/>
            <person name="Frazao C."/>
            <person name="Morais J."/>
            <person name="Coll M."/>
            <person name="Carrondo M.A."/>
        </authorList>
    </citation>
    <scope>X-RAY CRYSTALLOGRAPHY (1.9 ANGSTROMS)</scope>
</reference>
<reference key="7">
    <citation type="submission" date="1997-06" db="PDB data bank">
        <authorList>
            <person name="Simoes P."/>
            <person name="Matias P.M."/>
            <person name="Morais J."/>
            <person name="Wilson K."/>
            <person name="Dauter Z."/>
            <person name="Carrondo M.A."/>
        </authorList>
    </citation>
    <scope>X-RAY CRYSTALLOGRAPHY (1.67 ANGSTROMS)</scope>
</reference>
<reference key="8">
    <citation type="journal article" date="1999" name="Biochemistry">
        <title>Key role of phenylalanine 20 in cytochrome c3: structure, stability, and function studies.</title>
        <authorList>
            <person name="Dolla A."/>
            <person name="Arnoux P."/>
            <person name="Protasevich I."/>
            <person name="Lobachov V."/>
            <person name="Brugna M."/>
            <person name="Giudici-Orticoni M.-T."/>
            <person name="Haser R."/>
            <person name="Czjzek M."/>
            <person name="Makarov A."/>
            <person name="Bruschi M."/>
        </authorList>
    </citation>
    <scope>X-RAY CRYSTALLOGRAPHY (2.3 ANGSTROMS)</scope>
</reference>
<reference key="9">
    <citation type="journal article" date="1992" name="FEBS Lett.">
        <title>Assignment of the redox potentials to the four haems in Desulfovibrio vulgaris cytochrome c3 by 2D-NMR.</title>
        <authorList>
            <person name="Salgueiro C.A."/>
            <person name="Turner D.L."/>
            <person name="Santos H."/>
            <person name="Legall J."/>
            <person name="Xavier A.V."/>
        </authorList>
    </citation>
    <scope>STRUCTURE BY NMR</scope>
</reference>
<reference key="10">
    <citation type="journal article" date="1998" name="J. Mol. Biol.">
        <title>Solution structure of Desulfovibrio vulgaris (Hildenborough) ferrocytochrome c3: structural basis for functional cooperativity.</title>
        <authorList>
            <person name="Messias A.C."/>
            <person name="Kastrau D.H.W."/>
            <person name="Costa H.S."/>
            <person name="Legall J."/>
            <person name="Turner D.L."/>
            <person name="Santos H."/>
            <person name="Xavier A.V."/>
        </authorList>
    </citation>
    <scope>STRUCTURE BY NMR</scope>
</reference>
<feature type="signal peptide" evidence="2 3">
    <location>
        <begin position="1"/>
        <end position="22"/>
    </location>
</feature>
<feature type="chain" id="PRO_0000006504" description="Cytochrome c3" evidence="1">
    <location>
        <begin position="23"/>
        <end position="129"/>
    </location>
</feature>
<feature type="binding site" description="axial binding residue">
    <location>
        <position position="44"/>
    </location>
    <ligand>
        <name>heme c</name>
        <dbReference type="ChEBI" id="CHEBI:61717"/>
        <label>1</label>
    </ligand>
    <ligandPart>
        <name>Fe</name>
        <dbReference type="ChEBI" id="CHEBI:18248"/>
    </ligandPart>
</feature>
<feature type="binding site" description="axial binding residue">
    <location>
        <position position="47"/>
    </location>
    <ligand>
        <name>heme c</name>
        <dbReference type="ChEBI" id="CHEBI:61717"/>
        <label>3</label>
    </ligand>
    <ligandPart>
        <name>Fe</name>
        <dbReference type="ChEBI" id="CHEBI:18248"/>
    </ligandPart>
</feature>
<feature type="binding site" description="covalent">
    <location>
        <position position="52"/>
    </location>
    <ligand>
        <name>heme c</name>
        <dbReference type="ChEBI" id="CHEBI:61717"/>
        <label>1</label>
    </ligand>
</feature>
<feature type="binding site" description="covalent">
    <location>
        <position position="55"/>
    </location>
    <ligand>
        <name>heme c</name>
        <dbReference type="ChEBI" id="CHEBI:61717"/>
        <label>1</label>
    </ligand>
</feature>
<feature type="binding site" description="axial binding residue">
    <location>
        <position position="56"/>
    </location>
    <ligand>
        <name>heme c</name>
        <dbReference type="ChEBI" id="CHEBI:61717"/>
        <label>1</label>
    </ligand>
    <ligandPart>
        <name>Fe</name>
        <dbReference type="ChEBI" id="CHEBI:18248"/>
    </ligandPart>
</feature>
<feature type="binding site" description="axial binding residue">
    <location>
        <position position="57"/>
    </location>
    <ligand>
        <name>heme c</name>
        <dbReference type="ChEBI" id="CHEBI:61717"/>
        <label>2</label>
    </ligand>
    <ligandPart>
        <name>Fe</name>
        <dbReference type="ChEBI" id="CHEBI:18248"/>
    </ligandPart>
</feature>
<feature type="binding site" description="covalent">
    <location>
        <position position="68"/>
    </location>
    <ligand>
        <name>heme c</name>
        <dbReference type="ChEBI" id="CHEBI:61717"/>
        <label>2</label>
    </ligand>
</feature>
<feature type="binding site" description="covalent">
    <location>
        <position position="73"/>
    </location>
    <ligand>
        <name>heme c</name>
        <dbReference type="ChEBI" id="CHEBI:61717"/>
        <label>2</label>
    </ligand>
</feature>
<feature type="binding site" description="axial binding residue">
    <location>
        <position position="74"/>
    </location>
    <ligand>
        <name>heme c</name>
        <dbReference type="ChEBI" id="CHEBI:61717"/>
        <label>2</label>
    </ligand>
    <ligandPart>
        <name>Fe</name>
        <dbReference type="ChEBI" id="CHEBI:18248"/>
    </ligandPart>
</feature>
<feature type="binding site" description="axial binding residue">
    <location>
        <position position="92"/>
    </location>
    <ligand>
        <name>heme c</name>
        <dbReference type="ChEBI" id="CHEBI:61717"/>
        <label>4</label>
    </ligand>
    <ligandPart>
        <name>Fe</name>
        <dbReference type="ChEBI" id="CHEBI:18248"/>
    </ligandPart>
</feature>
<feature type="binding site" description="covalent">
    <location>
        <position position="101"/>
    </location>
    <ligand>
        <name>heme c</name>
        <dbReference type="ChEBI" id="CHEBI:61717"/>
        <label>3</label>
    </ligand>
</feature>
<feature type="binding site" description="covalent">
    <location>
        <position position="104"/>
    </location>
    <ligand>
        <name>heme c</name>
        <dbReference type="ChEBI" id="CHEBI:61717"/>
        <label>3</label>
    </ligand>
</feature>
<feature type="binding site" description="axial binding residue">
    <location>
        <position position="105"/>
    </location>
    <ligand>
        <name>heme c</name>
        <dbReference type="ChEBI" id="CHEBI:61717"/>
        <label>3</label>
    </ligand>
    <ligandPart>
        <name>Fe</name>
        <dbReference type="ChEBI" id="CHEBI:18248"/>
    </ligandPart>
</feature>
<feature type="binding site" description="covalent">
    <location>
        <position position="122"/>
    </location>
    <ligand>
        <name>heme c</name>
        <dbReference type="ChEBI" id="CHEBI:61717"/>
        <label>4</label>
    </ligand>
</feature>
<feature type="binding site" description="covalent">
    <location>
        <position position="127"/>
    </location>
    <ligand>
        <name>heme c</name>
        <dbReference type="ChEBI" id="CHEBI:61717"/>
        <label>4</label>
    </ligand>
</feature>
<feature type="binding site" description="axial binding residue">
    <location>
        <position position="128"/>
    </location>
    <ligand>
        <name>heme c</name>
        <dbReference type="ChEBI" id="CHEBI:61717"/>
        <label>4</label>
    </ligand>
    <ligandPart>
        <name>Fe</name>
        <dbReference type="ChEBI" id="CHEBI:18248"/>
    </ligandPart>
</feature>
<feature type="strand" evidence="6">
    <location>
        <begin position="31"/>
        <end position="33"/>
    </location>
</feature>
<feature type="strand" evidence="6">
    <location>
        <begin position="35"/>
        <end position="38"/>
    </location>
</feature>
<feature type="strand" evidence="6">
    <location>
        <begin position="40"/>
        <end position="42"/>
    </location>
</feature>
<feature type="helix" evidence="6">
    <location>
        <begin position="45"/>
        <end position="47"/>
    </location>
</feature>
<feature type="strand" evidence="5">
    <location>
        <begin position="48"/>
        <end position="50"/>
    </location>
</feature>
<feature type="helix" evidence="6">
    <location>
        <begin position="52"/>
        <end position="54"/>
    </location>
</feature>
<feature type="strand" evidence="5">
    <location>
        <begin position="60"/>
        <end position="63"/>
    </location>
</feature>
<feature type="turn" evidence="5">
    <location>
        <begin position="70"/>
        <end position="72"/>
    </location>
</feature>
<feature type="strand" evidence="4">
    <location>
        <begin position="83"/>
        <end position="85"/>
    </location>
</feature>
<feature type="helix" evidence="6">
    <location>
        <begin position="87"/>
        <end position="92"/>
    </location>
</feature>
<feature type="strand" evidence="4">
    <location>
        <begin position="95"/>
        <end position="98"/>
    </location>
</feature>
<feature type="helix" evidence="6">
    <location>
        <begin position="101"/>
        <end position="109"/>
    </location>
</feature>
<feature type="helix" evidence="6">
    <location>
        <begin position="113"/>
        <end position="120"/>
    </location>
</feature>
<feature type="strand" evidence="6">
    <location>
        <begin position="122"/>
        <end position="127"/>
    </location>
</feature>
<keyword id="KW-0002">3D-structure</keyword>
<keyword id="KW-0903">Direct protein sequencing</keyword>
<keyword id="KW-0249">Electron transport</keyword>
<keyword id="KW-0349">Heme</keyword>
<keyword id="KW-0408">Iron</keyword>
<keyword id="KW-0479">Metal-binding</keyword>
<keyword id="KW-0574">Periplasm</keyword>
<keyword id="KW-1185">Reference proteome</keyword>
<keyword id="KW-0732">Signal</keyword>
<keyword id="KW-0763">Sulfate respiration</keyword>
<keyword id="KW-0813">Transport</keyword>
<protein>
    <recommendedName>
        <fullName>Cytochrome c3</fullName>
    </recommendedName>
</protein>
<sequence>MRKLFFCGVLALAVAFALPVVAAPKAPADGLKMEATKQPVVFNHSTHKSVKCGDCHHPVNGKEDYRKCGTAGCHDSMDKKDKSAKGYYHVMHDKNTKFKSCVGCHVEVAGADAAKKKDLTGCKKSKCHE</sequence>
<accession>P00131</accession>
<accession>P81150</accession>
<proteinExistence type="evidence at protein level"/>
<comment type="function">
    <text>Participates in sulfate respiration coupled with phosphorylation by transferring electrons from the enzyme dehydrogenase to ferredoxin.</text>
</comment>
<comment type="subcellular location">
    <subcellularLocation>
        <location>Periplasm</location>
    </subcellularLocation>
</comment>
<comment type="PTM">
    <text>Binds 4 heme c groups per subunit.</text>
</comment>
<comment type="miscellaneous">
    <text>The second and fourth heme binding sites have unusual CXXXXCH motifs.</text>
</comment>
<evidence type="ECO:0000269" key="1">
    <source>
    </source>
</evidence>
<evidence type="ECO:0000269" key="2">
    <source>
    </source>
</evidence>
<evidence type="ECO:0000269" key="3">
    <source>
    </source>
</evidence>
<evidence type="ECO:0007829" key="4">
    <source>
        <dbReference type="PDB" id="1A2I"/>
    </source>
</evidence>
<evidence type="ECO:0007829" key="5">
    <source>
        <dbReference type="PDB" id="2BPN"/>
    </source>
</evidence>
<evidence type="ECO:0007829" key="6">
    <source>
        <dbReference type="PDB" id="2CTH"/>
    </source>
</evidence>
<dbReference type="EMBL" id="X04304">
    <property type="protein sequence ID" value="CAA27847.1"/>
    <property type="molecule type" value="Genomic_DNA"/>
</dbReference>
<dbReference type="EMBL" id="AE017285">
    <property type="protein sequence ID" value="AAS97641.1"/>
    <property type="molecule type" value="Genomic_DNA"/>
</dbReference>
<dbReference type="PIR" id="A24799">
    <property type="entry name" value="CCDV3"/>
</dbReference>
<dbReference type="RefSeq" id="WP_010940429.1">
    <property type="nucleotide sequence ID" value="NC_002937.3"/>
</dbReference>
<dbReference type="RefSeq" id="YP_012381.1">
    <property type="nucleotide sequence ID" value="NC_002937.3"/>
</dbReference>
<dbReference type="PDB" id="1A2I">
    <property type="method" value="NMR"/>
    <property type="chains" value="A=23-129"/>
</dbReference>
<dbReference type="PDB" id="1GX7">
    <property type="method" value="NMR"/>
    <property type="chains" value="E=23-129"/>
</dbReference>
<dbReference type="PDB" id="1MDV">
    <property type="method" value="X-ray"/>
    <property type="resolution" value="2.30 A"/>
    <property type="chains" value="A/B=23-129"/>
</dbReference>
<dbReference type="PDB" id="2BPN">
    <property type="method" value="NMR"/>
    <property type="chains" value="A=23-129"/>
</dbReference>
<dbReference type="PDB" id="2CTH">
    <property type="method" value="X-ray"/>
    <property type="resolution" value="1.67 A"/>
    <property type="chains" value="A/B=23-129"/>
</dbReference>
<dbReference type="PDB" id="2CYM">
    <property type="method" value="X-ray"/>
    <property type="resolution" value="2.00 A"/>
    <property type="chains" value="A=23-129"/>
</dbReference>
<dbReference type="PDBsum" id="1A2I"/>
<dbReference type="PDBsum" id="1GX7"/>
<dbReference type="PDBsum" id="1MDV"/>
<dbReference type="PDBsum" id="2BPN"/>
<dbReference type="PDBsum" id="2CTH"/>
<dbReference type="PDBsum" id="2CYM"/>
<dbReference type="BMRB" id="P00131"/>
<dbReference type="SMR" id="P00131"/>
<dbReference type="STRING" id="882.DVU_3171"/>
<dbReference type="PaxDb" id="882-DVU_3171"/>
<dbReference type="EnsemblBacteria" id="AAS97641">
    <property type="protein sequence ID" value="AAS97641"/>
    <property type="gene ID" value="DVU_3171"/>
</dbReference>
<dbReference type="KEGG" id="dvu:DVU_3171"/>
<dbReference type="PATRIC" id="fig|882.5.peg.2876"/>
<dbReference type="eggNOG" id="ENOG503407D">
    <property type="taxonomic scope" value="Bacteria"/>
</dbReference>
<dbReference type="HOGENOM" id="CLU_125874_3_0_7"/>
<dbReference type="OrthoDB" id="5418612at2"/>
<dbReference type="EvolutionaryTrace" id="P00131"/>
<dbReference type="Proteomes" id="UP000002194">
    <property type="component" value="Chromosome"/>
</dbReference>
<dbReference type="GO" id="GO:0042597">
    <property type="term" value="C:periplasmic space"/>
    <property type="evidence" value="ECO:0007669"/>
    <property type="project" value="UniProtKB-SubCell"/>
</dbReference>
<dbReference type="GO" id="GO:0009055">
    <property type="term" value="F:electron transfer activity"/>
    <property type="evidence" value="ECO:0007669"/>
    <property type="project" value="InterPro"/>
</dbReference>
<dbReference type="GO" id="GO:0020037">
    <property type="term" value="F:heme binding"/>
    <property type="evidence" value="ECO:0007669"/>
    <property type="project" value="InterPro"/>
</dbReference>
<dbReference type="GO" id="GO:0046872">
    <property type="term" value="F:metal ion binding"/>
    <property type="evidence" value="ECO:0007669"/>
    <property type="project" value="UniProtKB-KW"/>
</dbReference>
<dbReference type="GO" id="GO:0009061">
    <property type="term" value="P:anaerobic respiration"/>
    <property type="evidence" value="ECO:0007669"/>
    <property type="project" value="UniProtKB-KW"/>
</dbReference>
<dbReference type="CDD" id="cd08168">
    <property type="entry name" value="Cytochrom_C3"/>
    <property type="match status" value="1"/>
</dbReference>
<dbReference type="Gene3D" id="3.90.10.10">
    <property type="entry name" value="Cytochrome C3"/>
    <property type="match status" value="1"/>
</dbReference>
<dbReference type="InterPro" id="IPR002322">
    <property type="entry name" value="Cyt_c_III"/>
</dbReference>
<dbReference type="InterPro" id="IPR020942">
    <property type="entry name" value="Cyt_c_III_dom"/>
</dbReference>
<dbReference type="InterPro" id="IPR036280">
    <property type="entry name" value="Multihaem_cyt_sf"/>
</dbReference>
<dbReference type="Pfam" id="PF02085">
    <property type="entry name" value="Cytochrom_CIII"/>
    <property type="match status" value="1"/>
</dbReference>
<dbReference type="PRINTS" id="PR00609">
    <property type="entry name" value="CYTOCHROMEC3"/>
</dbReference>
<dbReference type="SUPFAM" id="SSF48695">
    <property type="entry name" value="Multiheme cytochromes"/>
    <property type="match status" value="1"/>
</dbReference>
<dbReference type="PROSITE" id="PS51008">
    <property type="entry name" value="MULTIHEME_CYTC"/>
    <property type="match status" value="1"/>
</dbReference>